<comment type="function">
    <text evidence="1">Produces ATP from ADP in the presence of a proton gradient across the membrane. The gamma chain is believed to be important in regulating ATPase activity and the flow of protons through the CF(0) complex.</text>
</comment>
<comment type="subunit">
    <text evidence="1">F-type ATPases have 2 components, CF(1) - the catalytic core - and CF(0) - the membrane proton channel. CF(1) has five subunits: alpha(3), beta(3), gamma(1), delta(1), epsilon(1). CF(0) has three main subunits: a, b and c.</text>
</comment>
<comment type="subcellular location">
    <subcellularLocation>
        <location evidence="1">Cell inner membrane</location>
        <topology evidence="1">Peripheral membrane protein</topology>
    </subcellularLocation>
</comment>
<comment type="similarity">
    <text evidence="1">Belongs to the ATPase gamma chain family.</text>
</comment>
<organism>
    <name type="scientific">Rhodopseudomonas palustris (strain HaA2)</name>
    <dbReference type="NCBI Taxonomy" id="316058"/>
    <lineage>
        <taxon>Bacteria</taxon>
        <taxon>Pseudomonadati</taxon>
        <taxon>Pseudomonadota</taxon>
        <taxon>Alphaproteobacteria</taxon>
        <taxon>Hyphomicrobiales</taxon>
        <taxon>Nitrobacteraceae</taxon>
        <taxon>Rhodopseudomonas</taxon>
    </lineage>
</organism>
<reference key="1">
    <citation type="submission" date="2006-01" db="EMBL/GenBank/DDBJ databases">
        <title>Complete sequence of Rhodopseudomonas palustris HaA2.</title>
        <authorList>
            <consortium name="US DOE Joint Genome Institute"/>
            <person name="Copeland A."/>
            <person name="Lucas S."/>
            <person name="Lapidus A."/>
            <person name="Barry K."/>
            <person name="Detter J.C."/>
            <person name="Glavina T."/>
            <person name="Hammon N."/>
            <person name="Israni S."/>
            <person name="Pitluck S."/>
            <person name="Chain P."/>
            <person name="Malfatti S."/>
            <person name="Shin M."/>
            <person name="Vergez L."/>
            <person name="Schmutz J."/>
            <person name="Larimer F."/>
            <person name="Land M."/>
            <person name="Hauser L."/>
            <person name="Pelletier D.A."/>
            <person name="Kyrpides N."/>
            <person name="Anderson I."/>
            <person name="Oda Y."/>
            <person name="Harwood C.S."/>
            <person name="Richardson P."/>
        </authorList>
    </citation>
    <scope>NUCLEOTIDE SEQUENCE [LARGE SCALE GENOMIC DNA]</scope>
    <source>
        <strain>HaA2</strain>
    </source>
</reference>
<feature type="chain" id="PRO_1000053304" description="ATP synthase gamma chain">
    <location>
        <begin position="1"/>
        <end position="291"/>
    </location>
</feature>
<gene>
    <name evidence="1" type="primary">atpG</name>
    <name type="ordered locus">RPB_0266</name>
</gene>
<proteinExistence type="inferred from homology"/>
<evidence type="ECO:0000255" key="1">
    <source>
        <dbReference type="HAMAP-Rule" id="MF_00815"/>
    </source>
</evidence>
<keyword id="KW-0066">ATP synthesis</keyword>
<keyword id="KW-0997">Cell inner membrane</keyword>
<keyword id="KW-1003">Cell membrane</keyword>
<keyword id="KW-0139">CF(1)</keyword>
<keyword id="KW-0375">Hydrogen ion transport</keyword>
<keyword id="KW-0406">Ion transport</keyword>
<keyword id="KW-0472">Membrane</keyword>
<keyword id="KW-1185">Reference proteome</keyword>
<keyword id="KW-0813">Transport</keyword>
<sequence length="291" mass="31949">MASLKDMRVRIASTKATQKITKAMQMVAASKLRRAQMAAEAARPYAEKMDSVISNIAGAAAGSPGAPVLLAGTGKDQVHLLLVCTGERGLSGAFNSSIVRLARERAYALMNQGKEVKFFCVGRKGYEQLRRTFDKQIIENLELRSVRQLGFVNAEDIAKKVIARFNAGEFDVCTLFYSRFKSVISQIPTAQQLIPLVVEAPAAGSVATSYEYEPEEDEILSTLLPRNLAVQIFRALLENNASFYGAQMSAMDNATRNAGDMIRKQTLIYNRTRQAMITKELIEIISGAEAI</sequence>
<dbReference type="EMBL" id="CP000250">
    <property type="protein sequence ID" value="ABD04977.1"/>
    <property type="molecule type" value="Genomic_DNA"/>
</dbReference>
<dbReference type="RefSeq" id="WP_011439167.1">
    <property type="nucleotide sequence ID" value="NC_007778.1"/>
</dbReference>
<dbReference type="SMR" id="Q2J3I3"/>
<dbReference type="STRING" id="316058.RPB_0266"/>
<dbReference type="KEGG" id="rpb:RPB_0266"/>
<dbReference type="eggNOG" id="COG0224">
    <property type="taxonomic scope" value="Bacteria"/>
</dbReference>
<dbReference type="HOGENOM" id="CLU_050669_0_1_5"/>
<dbReference type="OrthoDB" id="9812769at2"/>
<dbReference type="Proteomes" id="UP000008809">
    <property type="component" value="Chromosome"/>
</dbReference>
<dbReference type="GO" id="GO:0005886">
    <property type="term" value="C:plasma membrane"/>
    <property type="evidence" value="ECO:0007669"/>
    <property type="project" value="UniProtKB-SubCell"/>
</dbReference>
<dbReference type="GO" id="GO:0045259">
    <property type="term" value="C:proton-transporting ATP synthase complex"/>
    <property type="evidence" value="ECO:0007669"/>
    <property type="project" value="UniProtKB-KW"/>
</dbReference>
<dbReference type="GO" id="GO:0005524">
    <property type="term" value="F:ATP binding"/>
    <property type="evidence" value="ECO:0007669"/>
    <property type="project" value="UniProtKB-UniRule"/>
</dbReference>
<dbReference type="GO" id="GO:0046933">
    <property type="term" value="F:proton-transporting ATP synthase activity, rotational mechanism"/>
    <property type="evidence" value="ECO:0007669"/>
    <property type="project" value="UniProtKB-UniRule"/>
</dbReference>
<dbReference type="GO" id="GO:0042777">
    <property type="term" value="P:proton motive force-driven plasma membrane ATP synthesis"/>
    <property type="evidence" value="ECO:0007669"/>
    <property type="project" value="UniProtKB-UniRule"/>
</dbReference>
<dbReference type="CDD" id="cd12151">
    <property type="entry name" value="F1-ATPase_gamma"/>
    <property type="match status" value="1"/>
</dbReference>
<dbReference type="FunFam" id="1.10.287.80:FF:000001">
    <property type="entry name" value="ATP synthase gamma chain"/>
    <property type="match status" value="1"/>
</dbReference>
<dbReference type="Gene3D" id="3.40.1380.10">
    <property type="match status" value="1"/>
</dbReference>
<dbReference type="Gene3D" id="1.10.287.80">
    <property type="entry name" value="ATP synthase, gamma subunit, helix hairpin domain"/>
    <property type="match status" value="1"/>
</dbReference>
<dbReference type="HAMAP" id="MF_00815">
    <property type="entry name" value="ATP_synth_gamma_bact"/>
    <property type="match status" value="1"/>
</dbReference>
<dbReference type="InterPro" id="IPR035968">
    <property type="entry name" value="ATP_synth_F1_ATPase_gsu"/>
</dbReference>
<dbReference type="InterPro" id="IPR000131">
    <property type="entry name" value="ATP_synth_F1_gsu"/>
</dbReference>
<dbReference type="InterPro" id="IPR023632">
    <property type="entry name" value="ATP_synth_F1_gsu_CS"/>
</dbReference>
<dbReference type="NCBIfam" id="TIGR01146">
    <property type="entry name" value="ATPsyn_F1gamma"/>
    <property type="match status" value="1"/>
</dbReference>
<dbReference type="NCBIfam" id="NF004146">
    <property type="entry name" value="PRK05621.1-4"/>
    <property type="match status" value="1"/>
</dbReference>
<dbReference type="PANTHER" id="PTHR11693">
    <property type="entry name" value="ATP SYNTHASE GAMMA CHAIN"/>
    <property type="match status" value="1"/>
</dbReference>
<dbReference type="PANTHER" id="PTHR11693:SF22">
    <property type="entry name" value="ATP SYNTHASE SUBUNIT GAMMA, MITOCHONDRIAL"/>
    <property type="match status" value="1"/>
</dbReference>
<dbReference type="Pfam" id="PF00231">
    <property type="entry name" value="ATP-synt"/>
    <property type="match status" value="1"/>
</dbReference>
<dbReference type="PIRSF" id="PIRSF039089">
    <property type="entry name" value="ATP_synthase_gamma"/>
    <property type="match status" value="1"/>
</dbReference>
<dbReference type="PRINTS" id="PR00126">
    <property type="entry name" value="ATPASEGAMMA"/>
</dbReference>
<dbReference type="SUPFAM" id="SSF52943">
    <property type="entry name" value="ATP synthase (F1-ATPase), gamma subunit"/>
    <property type="match status" value="1"/>
</dbReference>
<dbReference type="PROSITE" id="PS00153">
    <property type="entry name" value="ATPASE_GAMMA"/>
    <property type="match status" value="1"/>
</dbReference>
<protein>
    <recommendedName>
        <fullName evidence="1">ATP synthase gamma chain</fullName>
    </recommendedName>
    <alternativeName>
        <fullName evidence="1">ATP synthase F1 sector gamma subunit</fullName>
    </alternativeName>
    <alternativeName>
        <fullName evidence="1">F-ATPase gamma subunit</fullName>
    </alternativeName>
</protein>
<accession>Q2J3I3</accession>
<name>ATPG_RHOP2</name>